<proteinExistence type="inferred from homology"/>
<sequence>MKRTYQPSKLVRKRRHGFRARQATTGGRKVLAARRARGRKRLSA</sequence>
<reference key="1">
    <citation type="journal article" date="2008" name="J. Bacteriol.">
        <title>Genome sequence of the chemolithoautotrophic bacterium Oligotropha carboxidovorans OM5T.</title>
        <authorList>
            <person name="Paul D."/>
            <person name="Bridges S."/>
            <person name="Burgess S.C."/>
            <person name="Dandass Y."/>
            <person name="Lawrence M.L."/>
        </authorList>
    </citation>
    <scope>NUCLEOTIDE SEQUENCE [LARGE SCALE GENOMIC DNA]</scope>
    <source>
        <strain>ATCC 49405 / DSM 1227 / KCTC 32145 / OM5</strain>
    </source>
</reference>
<reference key="2">
    <citation type="journal article" date="2011" name="J. Bacteriol.">
        <title>Complete genome sequences of the chemolithoautotrophic Oligotropha carboxidovorans strains OM4 and OM5.</title>
        <authorList>
            <person name="Volland S."/>
            <person name="Rachinger M."/>
            <person name="Strittmatter A."/>
            <person name="Daniel R."/>
            <person name="Gottschalk G."/>
            <person name="Meyer O."/>
        </authorList>
    </citation>
    <scope>NUCLEOTIDE SEQUENCE [LARGE SCALE GENOMIC DNA]</scope>
    <source>
        <strain>ATCC 49405 / DSM 1227 / KCTC 32145 / OM5</strain>
    </source>
</reference>
<name>RL34_AFIC5</name>
<evidence type="ECO:0000255" key="1">
    <source>
        <dbReference type="HAMAP-Rule" id="MF_00391"/>
    </source>
</evidence>
<evidence type="ECO:0000256" key="2">
    <source>
        <dbReference type="SAM" id="MobiDB-lite"/>
    </source>
</evidence>
<evidence type="ECO:0000305" key="3"/>
<feature type="chain" id="PRO_1000196079" description="Large ribosomal subunit protein bL34">
    <location>
        <begin position="1"/>
        <end position="44"/>
    </location>
</feature>
<feature type="region of interest" description="Disordered" evidence="2">
    <location>
        <begin position="1"/>
        <end position="44"/>
    </location>
</feature>
<feature type="compositionally biased region" description="Basic residues" evidence="2">
    <location>
        <begin position="10"/>
        <end position="19"/>
    </location>
</feature>
<feature type="compositionally biased region" description="Basic residues" evidence="2">
    <location>
        <begin position="31"/>
        <end position="44"/>
    </location>
</feature>
<gene>
    <name evidence="1" type="primary">rpmH</name>
    <name type="ordered locus">OCAR_7528</name>
    <name type="ordered locus">OCA5_c06115</name>
</gene>
<comment type="similarity">
    <text evidence="1">Belongs to the bacterial ribosomal protein bL34 family.</text>
</comment>
<keyword id="KW-1185">Reference proteome</keyword>
<keyword id="KW-0687">Ribonucleoprotein</keyword>
<keyword id="KW-0689">Ribosomal protein</keyword>
<protein>
    <recommendedName>
        <fullName evidence="1">Large ribosomal subunit protein bL34</fullName>
    </recommendedName>
    <alternativeName>
        <fullName evidence="3">50S ribosomal protein L34</fullName>
    </alternativeName>
</protein>
<organism>
    <name type="scientific">Afipia carboxidovorans (strain ATCC 49405 / DSM 1227 / KCTC 32145 / OM5)</name>
    <name type="common">Oligotropha carboxidovorans</name>
    <dbReference type="NCBI Taxonomy" id="504832"/>
    <lineage>
        <taxon>Bacteria</taxon>
        <taxon>Pseudomonadati</taxon>
        <taxon>Pseudomonadota</taxon>
        <taxon>Alphaproteobacteria</taxon>
        <taxon>Hyphomicrobiales</taxon>
        <taxon>Nitrobacteraceae</taxon>
        <taxon>Afipia</taxon>
    </lineage>
</organism>
<accession>B6JJN6</accession>
<dbReference type="EMBL" id="CP001196">
    <property type="protein sequence ID" value="ACI94630.1"/>
    <property type="molecule type" value="Genomic_DNA"/>
</dbReference>
<dbReference type="EMBL" id="CP002826">
    <property type="status" value="NOT_ANNOTATED_CDS"/>
    <property type="molecule type" value="Genomic_DNA"/>
</dbReference>
<dbReference type="RefSeq" id="WP_012564654.1">
    <property type="nucleotide sequence ID" value="NC_015684.1"/>
</dbReference>
<dbReference type="SMR" id="B6JJN6"/>
<dbReference type="KEGG" id="oca:OCAR_7528"/>
<dbReference type="eggNOG" id="COG0230">
    <property type="taxonomic scope" value="Bacteria"/>
</dbReference>
<dbReference type="Proteomes" id="UP000007730">
    <property type="component" value="Chromosome"/>
</dbReference>
<dbReference type="GO" id="GO:1990904">
    <property type="term" value="C:ribonucleoprotein complex"/>
    <property type="evidence" value="ECO:0007669"/>
    <property type="project" value="UniProtKB-KW"/>
</dbReference>
<dbReference type="GO" id="GO:0005840">
    <property type="term" value="C:ribosome"/>
    <property type="evidence" value="ECO:0007669"/>
    <property type="project" value="UniProtKB-KW"/>
</dbReference>
<dbReference type="GO" id="GO:0003735">
    <property type="term" value="F:structural constituent of ribosome"/>
    <property type="evidence" value="ECO:0007669"/>
    <property type="project" value="InterPro"/>
</dbReference>
<dbReference type="GO" id="GO:0006412">
    <property type="term" value="P:translation"/>
    <property type="evidence" value="ECO:0007669"/>
    <property type="project" value="UniProtKB-UniRule"/>
</dbReference>
<dbReference type="FunFam" id="1.10.287.3980:FF:000001">
    <property type="entry name" value="Mitochondrial ribosomal protein L34"/>
    <property type="match status" value="1"/>
</dbReference>
<dbReference type="Gene3D" id="1.10.287.3980">
    <property type="match status" value="1"/>
</dbReference>
<dbReference type="HAMAP" id="MF_00391">
    <property type="entry name" value="Ribosomal_bL34"/>
    <property type="match status" value="1"/>
</dbReference>
<dbReference type="InterPro" id="IPR000271">
    <property type="entry name" value="Ribosomal_bL34"/>
</dbReference>
<dbReference type="InterPro" id="IPR020939">
    <property type="entry name" value="Ribosomal_bL34_CS"/>
</dbReference>
<dbReference type="NCBIfam" id="TIGR01030">
    <property type="entry name" value="rpmH_bact"/>
    <property type="match status" value="1"/>
</dbReference>
<dbReference type="PANTHER" id="PTHR14503:SF4">
    <property type="entry name" value="LARGE RIBOSOMAL SUBUNIT PROTEIN BL34M"/>
    <property type="match status" value="1"/>
</dbReference>
<dbReference type="PANTHER" id="PTHR14503">
    <property type="entry name" value="MITOCHONDRIAL RIBOSOMAL PROTEIN 34 FAMILY MEMBER"/>
    <property type="match status" value="1"/>
</dbReference>
<dbReference type="Pfam" id="PF00468">
    <property type="entry name" value="Ribosomal_L34"/>
    <property type="match status" value="1"/>
</dbReference>
<dbReference type="PROSITE" id="PS00784">
    <property type="entry name" value="RIBOSOMAL_L34"/>
    <property type="match status" value="1"/>
</dbReference>